<keyword id="KW-0414">Isoprene biosynthesis</keyword>
<keyword id="KW-0464">Manganese</keyword>
<keyword id="KW-0479">Metal-binding</keyword>
<keyword id="KW-0521">NADP</keyword>
<keyword id="KW-0560">Oxidoreductase</keyword>
<sequence>MFKKTKITILGATGSIGDSTLAVIRETNDFEVFALTAFSNVEKLAELCQEFKPKFAVVPDLSKKQKLQSLVTDVEVLVGESGLEKVSSLAEIDIVMSAIVGIAGLKPTFAAAKAGKKILLANKESLVTAGHLLIDEVVKNNAQLIPVDSEHNAIFQCIDNHDKKCLPEIDKIILTASGGPFRDKQQLHELTDVTPEQACNHPNWQMGRKISVDSSTMVNKALEVIEAYWLFSVSADKIGVLIHPQSVTHSIVRYVDGSYIAQLGVPDMKTPIANAMYYPKRGSVNVESLDFTKYQLTFREACFERFEALKIVFNNLQNKNYAANIVFNAANEELVAAFLNKKIKYLEIIEVNKKVTKELNFENPKNIEEVFEIDRKTREYVDSVLG</sequence>
<dbReference type="EC" id="1.1.1.267" evidence="1"/>
<dbReference type="EMBL" id="CP000437">
    <property type="protein sequence ID" value="ABI82509.1"/>
    <property type="molecule type" value="Genomic_DNA"/>
</dbReference>
<dbReference type="RefSeq" id="WP_011648608.1">
    <property type="nucleotide sequence ID" value="NC_008369.1"/>
</dbReference>
<dbReference type="SMR" id="Q0BN25"/>
<dbReference type="KEGG" id="fth:FTH_0536"/>
<dbReference type="UniPathway" id="UPA00056">
    <property type="reaction ID" value="UER00092"/>
</dbReference>
<dbReference type="GO" id="GO:0030604">
    <property type="term" value="F:1-deoxy-D-xylulose-5-phosphate reductoisomerase activity"/>
    <property type="evidence" value="ECO:0007669"/>
    <property type="project" value="UniProtKB-UniRule"/>
</dbReference>
<dbReference type="GO" id="GO:0030145">
    <property type="term" value="F:manganese ion binding"/>
    <property type="evidence" value="ECO:0007669"/>
    <property type="project" value="TreeGrafter"/>
</dbReference>
<dbReference type="GO" id="GO:0070402">
    <property type="term" value="F:NADPH binding"/>
    <property type="evidence" value="ECO:0007669"/>
    <property type="project" value="InterPro"/>
</dbReference>
<dbReference type="GO" id="GO:0051484">
    <property type="term" value="P:isopentenyl diphosphate biosynthetic process, methylerythritol 4-phosphate pathway involved in terpenoid biosynthetic process"/>
    <property type="evidence" value="ECO:0007669"/>
    <property type="project" value="TreeGrafter"/>
</dbReference>
<dbReference type="FunFam" id="3.40.50.720:FF:000045">
    <property type="entry name" value="1-deoxy-D-xylulose 5-phosphate reductoisomerase"/>
    <property type="match status" value="1"/>
</dbReference>
<dbReference type="Gene3D" id="1.10.1740.10">
    <property type="match status" value="1"/>
</dbReference>
<dbReference type="Gene3D" id="3.40.50.720">
    <property type="entry name" value="NAD(P)-binding Rossmann-like Domain"/>
    <property type="match status" value="1"/>
</dbReference>
<dbReference type="HAMAP" id="MF_00183">
    <property type="entry name" value="DXP_reductoisom"/>
    <property type="match status" value="1"/>
</dbReference>
<dbReference type="InterPro" id="IPR003821">
    <property type="entry name" value="DXP_reductoisomerase"/>
</dbReference>
<dbReference type="InterPro" id="IPR013644">
    <property type="entry name" value="DXP_reductoisomerase_C"/>
</dbReference>
<dbReference type="InterPro" id="IPR013512">
    <property type="entry name" value="DXP_reductoisomerase_N"/>
</dbReference>
<dbReference type="InterPro" id="IPR026877">
    <property type="entry name" value="DXPR_C"/>
</dbReference>
<dbReference type="InterPro" id="IPR036169">
    <property type="entry name" value="DXPR_C_sf"/>
</dbReference>
<dbReference type="InterPro" id="IPR036291">
    <property type="entry name" value="NAD(P)-bd_dom_sf"/>
</dbReference>
<dbReference type="NCBIfam" id="TIGR00243">
    <property type="entry name" value="Dxr"/>
    <property type="match status" value="1"/>
</dbReference>
<dbReference type="PANTHER" id="PTHR30525">
    <property type="entry name" value="1-DEOXY-D-XYLULOSE 5-PHOSPHATE REDUCTOISOMERASE"/>
    <property type="match status" value="1"/>
</dbReference>
<dbReference type="PANTHER" id="PTHR30525:SF0">
    <property type="entry name" value="1-DEOXY-D-XYLULOSE 5-PHOSPHATE REDUCTOISOMERASE, CHLOROPLASTIC"/>
    <property type="match status" value="1"/>
</dbReference>
<dbReference type="Pfam" id="PF08436">
    <property type="entry name" value="DXP_redisom_C"/>
    <property type="match status" value="1"/>
</dbReference>
<dbReference type="Pfam" id="PF02670">
    <property type="entry name" value="DXP_reductoisom"/>
    <property type="match status" value="1"/>
</dbReference>
<dbReference type="Pfam" id="PF13288">
    <property type="entry name" value="DXPR_C"/>
    <property type="match status" value="1"/>
</dbReference>
<dbReference type="PIRSF" id="PIRSF006205">
    <property type="entry name" value="Dxp_reductismrs"/>
    <property type="match status" value="1"/>
</dbReference>
<dbReference type="SUPFAM" id="SSF69055">
    <property type="entry name" value="1-deoxy-D-xylulose-5-phosphate reductoisomerase, C-terminal domain"/>
    <property type="match status" value="1"/>
</dbReference>
<dbReference type="SUPFAM" id="SSF55347">
    <property type="entry name" value="Glyceraldehyde-3-phosphate dehydrogenase-like, C-terminal domain"/>
    <property type="match status" value="1"/>
</dbReference>
<dbReference type="SUPFAM" id="SSF51735">
    <property type="entry name" value="NAD(P)-binding Rossmann-fold domains"/>
    <property type="match status" value="1"/>
</dbReference>
<protein>
    <recommendedName>
        <fullName evidence="1">1-deoxy-D-xylulose 5-phosphate reductoisomerase</fullName>
        <shortName evidence="1">DXP reductoisomerase</shortName>
        <ecNumber evidence="1">1.1.1.267</ecNumber>
    </recommendedName>
    <alternativeName>
        <fullName evidence="1">1-deoxyxylulose-5-phosphate reductoisomerase</fullName>
    </alternativeName>
    <alternativeName>
        <fullName evidence="1">2-C-methyl-D-erythritol 4-phosphate synthase</fullName>
    </alternativeName>
</protein>
<accession>Q0BN25</accession>
<feature type="chain" id="PRO_1000020264" description="1-deoxy-D-xylulose 5-phosphate reductoisomerase">
    <location>
        <begin position="1"/>
        <end position="386"/>
    </location>
</feature>
<feature type="binding site" evidence="1">
    <location>
        <position position="13"/>
    </location>
    <ligand>
        <name>NADPH</name>
        <dbReference type="ChEBI" id="CHEBI:57783"/>
    </ligand>
</feature>
<feature type="binding site" evidence="1">
    <location>
        <position position="14"/>
    </location>
    <ligand>
        <name>NADPH</name>
        <dbReference type="ChEBI" id="CHEBI:57783"/>
    </ligand>
</feature>
<feature type="binding site" evidence="1">
    <location>
        <position position="15"/>
    </location>
    <ligand>
        <name>NADPH</name>
        <dbReference type="ChEBI" id="CHEBI:57783"/>
    </ligand>
</feature>
<feature type="binding site" evidence="1">
    <location>
        <position position="16"/>
    </location>
    <ligand>
        <name>NADPH</name>
        <dbReference type="ChEBI" id="CHEBI:57783"/>
    </ligand>
</feature>
<feature type="binding site" evidence="1">
    <location>
        <position position="40"/>
    </location>
    <ligand>
        <name>NADPH</name>
        <dbReference type="ChEBI" id="CHEBI:57783"/>
    </ligand>
</feature>
<feature type="binding site" evidence="1">
    <location>
        <position position="122"/>
    </location>
    <ligand>
        <name>NADPH</name>
        <dbReference type="ChEBI" id="CHEBI:57783"/>
    </ligand>
</feature>
<feature type="binding site" evidence="1">
    <location>
        <position position="123"/>
    </location>
    <ligand>
        <name>1-deoxy-D-xylulose 5-phosphate</name>
        <dbReference type="ChEBI" id="CHEBI:57792"/>
    </ligand>
</feature>
<feature type="binding site" evidence="1">
    <location>
        <position position="124"/>
    </location>
    <ligand>
        <name>NADPH</name>
        <dbReference type="ChEBI" id="CHEBI:57783"/>
    </ligand>
</feature>
<feature type="binding site" evidence="1">
    <location>
        <position position="148"/>
    </location>
    <ligand>
        <name>Mn(2+)</name>
        <dbReference type="ChEBI" id="CHEBI:29035"/>
    </ligand>
</feature>
<feature type="binding site" evidence="1">
    <location>
        <position position="149"/>
    </location>
    <ligand>
        <name>1-deoxy-D-xylulose 5-phosphate</name>
        <dbReference type="ChEBI" id="CHEBI:57792"/>
    </ligand>
</feature>
<feature type="binding site" evidence="1">
    <location>
        <position position="150"/>
    </location>
    <ligand>
        <name>1-deoxy-D-xylulose 5-phosphate</name>
        <dbReference type="ChEBI" id="CHEBI:57792"/>
    </ligand>
</feature>
<feature type="binding site" evidence="1">
    <location>
        <position position="150"/>
    </location>
    <ligand>
        <name>Mn(2+)</name>
        <dbReference type="ChEBI" id="CHEBI:29035"/>
    </ligand>
</feature>
<feature type="binding site" evidence="1">
    <location>
        <position position="177"/>
    </location>
    <ligand>
        <name>1-deoxy-D-xylulose 5-phosphate</name>
        <dbReference type="ChEBI" id="CHEBI:57792"/>
    </ligand>
</feature>
<feature type="binding site" evidence="1">
    <location>
        <position position="201"/>
    </location>
    <ligand>
        <name>1-deoxy-D-xylulose 5-phosphate</name>
        <dbReference type="ChEBI" id="CHEBI:57792"/>
    </ligand>
</feature>
<feature type="binding site" evidence="1">
    <location>
        <position position="207"/>
    </location>
    <ligand>
        <name>NADPH</name>
        <dbReference type="ChEBI" id="CHEBI:57783"/>
    </ligand>
</feature>
<feature type="binding site" evidence="1">
    <location>
        <position position="214"/>
    </location>
    <ligand>
        <name>1-deoxy-D-xylulose 5-phosphate</name>
        <dbReference type="ChEBI" id="CHEBI:57792"/>
    </ligand>
</feature>
<feature type="binding site" evidence="1">
    <location>
        <position position="219"/>
    </location>
    <ligand>
        <name>1-deoxy-D-xylulose 5-phosphate</name>
        <dbReference type="ChEBI" id="CHEBI:57792"/>
    </ligand>
</feature>
<feature type="binding site" evidence="1">
    <location>
        <position position="220"/>
    </location>
    <ligand>
        <name>1-deoxy-D-xylulose 5-phosphate</name>
        <dbReference type="ChEBI" id="CHEBI:57792"/>
    </ligand>
</feature>
<feature type="binding site" evidence="1">
    <location>
        <position position="223"/>
    </location>
    <ligand>
        <name>1-deoxy-D-xylulose 5-phosphate</name>
        <dbReference type="ChEBI" id="CHEBI:57792"/>
    </ligand>
</feature>
<feature type="binding site" evidence="1">
    <location>
        <position position="223"/>
    </location>
    <ligand>
        <name>Mn(2+)</name>
        <dbReference type="ChEBI" id="CHEBI:29035"/>
    </ligand>
</feature>
<organism>
    <name type="scientific">Francisella tularensis subsp. holarctica (strain OSU18)</name>
    <dbReference type="NCBI Taxonomy" id="393011"/>
    <lineage>
        <taxon>Bacteria</taxon>
        <taxon>Pseudomonadati</taxon>
        <taxon>Pseudomonadota</taxon>
        <taxon>Gammaproteobacteria</taxon>
        <taxon>Thiotrichales</taxon>
        <taxon>Francisellaceae</taxon>
        <taxon>Francisella</taxon>
    </lineage>
</organism>
<gene>
    <name evidence="1" type="primary">dxr</name>
    <name type="ordered locus">FTH_0536</name>
</gene>
<proteinExistence type="inferred from homology"/>
<reference key="1">
    <citation type="journal article" date="2006" name="J. Bacteriol.">
        <title>Chromosome rearrangement and diversification of Francisella tularensis revealed by the type B (OSU18) genome sequence.</title>
        <authorList>
            <person name="Petrosino J.F."/>
            <person name="Xiang Q."/>
            <person name="Karpathy S.E."/>
            <person name="Jiang H."/>
            <person name="Yerrapragada S."/>
            <person name="Liu Y."/>
            <person name="Gioia J."/>
            <person name="Hemphill L."/>
            <person name="Gonzalez A."/>
            <person name="Raghavan T.M."/>
            <person name="Uzman A."/>
            <person name="Fox G.E."/>
            <person name="Highlander S."/>
            <person name="Reichard M."/>
            <person name="Morton R.J."/>
            <person name="Clinkenbeard K.D."/>
            <person name="Weinstock G.M."/>
        </authorList>
    </citation>
    <scope>NUCLEOTIDE SEQUENCE [LARGE SCALE GENOMIC DNA]</scope>
    <source>
        <strain>OSU18</strain>
    </source>
</reference>
<comment type="function">
    <text evidence="1">Catalyzes the NADPH-dependent rearrangement and reduction of 1-deoxy-D-xylulose-5-phosphate (DXP) to 2-C-methyl-D-erythritol 4-phosphate (MEP).</text>
</comment>
<comment type="catalytic activity">
    <reaction evidence="1">
        <text>2-C-methyl-D-erythritol 4-phosphate + NADP(+) = 1-deoxy-D-xylulose 5-phosphate + NADPH + H(+)</text>
        <dbReference type="Rhea" id="RHEA:13717"/>
        <dbReference type="ChEBI" id="CHEBI:15378"/>
        <dbReference type="ChEBI" id="CHEBI:57783"/>
        <dbReference type="ChEBI" id="CHEBI:57792"/>
        <dbReference type="ChEBI" id="CHEBI:58262"/>
        <dbReference type="ChEBI" id="CHEBI:58349"/>
        <dbReference type="EC" id="1.1.1.267"/>
    </reaction>
    <physiologicalReaction direction="right-to-left" evidence="1">
        <dbReference type="Rhea" id="RHEA:13719"/>
    </physiologicalReaction>
</comment>
<comment type="cofactor">
    <cofactor evidence="1">
        <name>Mg(2+)</name>
        <dbReference type="ChEBI" id="CHEBI:18420"/>
    </cofactor>
    <cofactor evidence="1">
        <name>Mn(2+)</name>
        <dbReference type="ChEBI" id="CHEBI:29035"/>
    </cofactor>
</comment>
<comment type="pathway">
    <text evidence="1">Isoprenoid biosynthesis; isopentenyl diphosphate biosynthesis via DXP pathway; isopentenyl diphosphate from 1-deoxy-D-xylulose 5-phosphate: step 1/6.</text>
</comment>
<comment type="similarity">
    <text evidence="1">Belongs to the DXR family.</text>
</comment>
<evidence type="ECO:0000255" key="1">
    <source>
        <dbReference type="HAMAP-Rule" id="MF_00183"/>
    </source>
</evidence>
<name>DXR_FRATO</name>